<organism>
    <name type="scientific">Methanocaldococcus jannaschii (strain ATCC 43067 / DSM 2661 / JAL-1 / JCM 10045 / NBRC 100440)</name>
    <name type="common">Methanococcus jannaschii</name>
    <dbReference type="NCBI Taxonomy" id="243232"/>
    <lineage>
        <taxon>Archaea</taxon>
        <taxon>Methanobacteriati</taxon>
        <taxon>Methanobacteriota</taxon>
        <taxon>Methanomada group</taxon>
        <taxon>Methanococci</taxon>
        <taxon>Methanococcales</taxon>
        <taxon>Methanocaldococcaceae</taxon>
        <taxon>Methanocaldococcus</taxon>
    </lineage>
</organism>
<sequence>MIKVAVTGALGRMGSNIIKTITQQEDMKVVCAFEVPNHPKKGEDVGELIGIGKIGVPLSTADELDKVLKETKPDVLVDFTIAHACVENVKIAAKNGVNLVIGTTGFTEEQKAEIEKAIKENNVAAVISQNFAIGVNIFFKTLEFLAKKLGDYDIEIIEMHHRYKKDAPSGTALRAAEIIKANRGIESVFVYGRYGMTGERKKEEIGIHALRGGDVVGDHTVIFAGDGERIELTHRASSRQAFVNGVILAIRYIADKKEGIYNTFDVLGLNEIKF</sequence>
<comment type="function">
    <text evidence="1">Catalyzes the conversion of 4-hydroxy-tetrahydrodipicolinate (HTPA) to tetrahydrodipicolinate.</text>
</comment>
<comment type="catalytic activity">
    <reaction evidence="1">
        <text>(S)-2,3,4,5-tetrahydrodipicolinate + NAD(+) + H2O = (2S,4S)-4-hydroxy-2,3,4,5-tetrahydrodipicolinate + NADH + H(+)</text>
        <dbReference type="Rhea" id="RHEA:35323"/>
        <dbReference type="ChEBI" id="CHEBI:15377"/>
        <dbReference type="ChEBI" id="CHEBI:15378"/>
        <dbReference type="ChEBI" id="CHEBI:16845"/>
        <dbReference type="ChEBI" id="CHEBI:57540"/>
        <dbReference type="ChEBI" id="CHEBI:57945"/>
        <dbReference type="ChEBI" id="CHEBI:67139"/>
        <dbReference type="EC" id="1.17.1.8"/>
    </reaction>
</comment>
<comment type="catalytic activity">
    <reaction evidence="1">
        <text>(S)-2,3,4,5-tetrahydrodipicolinate + NADP(+) + H2O = (2S,4S)-4-hydroxy-2,3,4,5-tetrahydrodipicolinate + NADPH + H(+)</text>
        <dbReference type="Rhea" id="RHEA:35331"/>
        <dbReference type="ChEBI" id="CHEBI:15377"/>
        <dbReference type="ChEBI" id="CHEBI:15378"/>
        <dbReference type="ChEBI" id="CHEBI:16845"/>
        <dbReference type="ChEBI" id="CHEBI:57783"/>
        <dbReference type="ChEBI" id="CHEBI:58349"/>
        <dbReference type="ChEBI" id="CHEBI:67139"/>
        <dbReference type="EC" id="1.17.1.8"/>
    </reaction>
</comment>
<comment type="pathway">
    <text evidence="1">Amino-acid biosynthesis; L-lysine biosynthesis via DAP pathway; (S)-tetrahydrodipicolinate from L-aspartate: step 4/4.</text>
</comment>
<comment type="subcellular location">
    <subcellularLocation>
        <location evidence="1">Cytoplasm</location>
    </subcellularLocation>
</comment>
<comment type="similarity">
    <text evidence="1">Belongs to the DapB family.</text>
</comment>
<comment type="caution">
    <text evidence="2">Was originally thought to be a dihydrodipicolinate reductase (DHDPR), catalyzing the conversion of dihydrodipicolinate to tetrahydrodipicolinate. However, it was shown in E.coli that the substrate of the enzymatic reaction is not dihydrodipicolinate (DHDP) but in fact (2S,4S)-4-hydroxy-2,3,4,5-tetrahydrodipicolinic acid (HTPA), the product released by the DapA-catalyzed reaction.</text>
</comment>
<comment type="sequence caution" evidence="2">
    <conflict type="erroneous initiation">
        <sequence resource="EMBL-CDS" id="AAB98410"/>
    </conflict>
</comment>
<protein>
    <recommendedName>
        <fullName evidence="1">4-hydroxy-tetrahydrodipicolinate reductase</fullName>
        <shortName evidence="1">HTPA reductase</shortName>
        <ecNumber evidence="1">1.17.1.8</ecNumber>
    </recommendedName>
</protein>
<proteinExistence type="inferred from homology"/>
<accession>Q57865</accession>
<gene>
    <name evidence="1" type="primary">dapB</name>
    <name type="ordered locus">MJ0422</name>
</gene>
<reference key="1">
    <citation type="journal article" date="1996" name="Science">
        <title>Complete genome sequence of the methanogenic archaeon, Methanococcus jannaschii.</title>
        <authorList>
            <person name="Bult C.J."/>
            <person name="White O."/>
            <person name="Olsen G.J."/>
            <person name="Zhou L."/>
            <person name="Fleischmann R.D."/>
            <person name="Sutton G.G."/>
            <person name="Blake J.A."/>
            <person name="FitzGerald L.M."/>
            <person name="Clayton R.A."/>
            <person name="Gocayne J.D."/>
            <person name="Kerlavage A.R."/>
            <person name="Dougherty B.A."/>
            <person name="Tomb J.-F."/>
            <person name="Adams M.D."/>
            <person name="Reich C.I."/>
            <person name="Overbeek R."/>
            <person name="Kirkness E.F."/>
            <person name="Weinstock K.G."/>
            <person name="Merrick J.M."/>
            <person name="Glodek A."/>
            <person name="Scott J.L."/>
            <person name="Geoghagen N.S.M."/>
            <person name="Weidman J.F."/>
            <person name="Fuhrmann J.L."/>
            <person name="Nguyen D."/>
            <person name="Utterback T.R."/>
            <person name="Kelley J.M."/>
            <person name="Peterson J.D."/>
            <person name="Sadow P.W."/>
            <person name="Hanna M.C."/>
            <person name="Cotton M.D."/>
            <person name="Roberts K.M."/>
            <person name="Hurst M.A."/>
            <person name="Kaine B.P."/>
            <person name="Borodovsky M."/>
            <person name="Klenk H.-P."/>
            <person name="Fraser C.M."/>
            <person name="Smith H.O."/>
            <person name="Woese C.R."/>
            <person name="Venter J.C."/>
        </authorList>
    </citation>
    <scope>NUCLEOTIDE SEQUENCE [LARGE SCALE GENOMIC DNA]</scope>
    <source>
        <strain>ATCC 43067 / DSM 2661 / JAL-1 / JCM 10045 / NBRC 100440</strain>
    </source>
</reference>
<dbReference type="EC" id="1.17.1.8" evidence="1"/>
<dbReference type="EMBL" id="L77117">
    <property type="protein sequence ID" value="AAB98410.1"/>
    <property type="status" value="ALT_INIT"/>
    <property type="molecule type" value="Genomic_DNA"/>
</dbReference>
<dbReference type="PIR" id="F64352">
    <property type="entry name" value="F64352"/>
</dbReference>
<dbReference type="RefSeq" id="WP_064496490.1">
    <property type="nucleotide sequence ID" value="NC_000909.1"/>
</dbReference>
<dbReference type="SMR" id="Q57865"/>
<dbReference type="FunCoup" id="Q57865">
    <property type="interactions" value="111"/>
</dbReference>
<dbReference type="STRING" id="243232.MJ_0422"/>
<dbReference type="PaxDb" id="243232-MJ_0422"/>
<dbReference type="EnsemblBacteria" id="AAB98410">
    <property type="protein sequence ID" value="AAB98410"/>
    <property type="gene ID" value="MJ_0422"/>
</dbReference>
<dbReference type="GeneID" id="1451282"/>
<dbReference type="KEGG" id="mja:MJ_0422"/>
<dbReference type="eggNOG" id="arCOG04393">
    <property type="taxonomic scope" value="Archaea"/>
</dbReference>
<dbReference type="HOGENOM" id="CLU_047479_2_1_2"/>
<dbReference type="InParanoid" id="Q57865"/>
<dbReference type="OrthoDB" id="195035at2157"/>
<dbReference type="PhylomeDB" id="Q57865"/>
<dbReference type="UniPathway" id="UPA00034">
    <property type="reaction ID" value="UER00018"/>
</dbReference>
<dbReference type="Proteomes" id="UP000000805">
    <property type="component" value="Chromosome"/>
</dbReference>
<dbReference type="GO" id="GO:0005737">
    <property type="term" value="C:cytoplasm"/>
    <property type="evidence" value="ECO:0007669"/>
    <property type="project" value="UniProtKB-SubCell"/>
</dbReference>
<dbReference type="GO" id="GO:0008839">
    <property type="term" value="F:4-hydroxy-tetrahydrodipicolinate reductase"/>
    <property type="evidence" value="ECO:0000318"/>
    <property type="project" value="GO_Central"/>
</dbReference>
<dbReference type="GO" id="GO:0051287">
    <property type="term" value="F:NAD binding"/>
    <property type="evidence" value="ECO:0007669"/>
    <property type="project" value="UniProtKB-UniRule"/>
</dbReference>
<dbReference type="GO" id="GO:0050661">
    <property type="term" value="F:NADP binding"/>
    <property type="evidence" value="ECO:0007669"/>
    <property type="project" value="UniProtKB-UniRule"/>
</dbReference>
<dbReference type="GO" id="GO:0016726">
    <property type="term" value="F:oxidoreductase activity, acting on CH or CH2 groups, NAD or NADP as acceptor"/>
    <property type="evidence" value="ECO:0007669"/>
    <property type="project" value="UniProtKB-UniRule"/>
</dbReference>
<dbReference type="GO" id="GO:0019877">
    <property type="term" value="P:diaminopimelate biosynthetic process"/>
    <property type="evidence" value="ECO:0000318"/>
    <property type="project" value="GO_Central"/>
</dbReference>
<dbReference type="GO" id="GO:0009089">
    <property type="term" value="P:lysine biosynthetic process via diaminopimelate"/>
    <property type="evidence" value="ECO:0007669"/>
    <property type="project" value="UniProtKB-UniRule"/>
</dbReference>
<dbReference type="CDD" id="cd02274">
    <property type="entry name" value="DHDPR_N"/>
    <property type="match status" value="1"/>
</dbReference>
<dbReference type="FunFam" id="3.30.360.10:FF:000004">
    <property type="entry name" value="4-hydroxy-tetrahydrodipicolinate reductase"/>
    <property type="match status" value="1"/>
</dbReference>
<dbReference type="Gene3D" id="3.30.360.10">
    <property type="entry name" value="Dihydrodipicolinate Reductase, domain 2"/>
    <property type="match status" value="1"/>
</dbReference>
<dbReference type="Gene3D" id="3.40.50.720">
    <property type="entry name" value="NAD(P)-binding Rossmann-like Domain"/>
    <property type="match status" value="1"/>
</dbReference>
<dbReference type="HAMAP" id="MF_00102">
    <property type="entry name" value="DapB"/>
    <property type="match status" value="1"/>
</dbReference>
<dbReference type="InterPro" id="IPR022663">
    <property type="entry name" value="DapB_C"/>
</dbReference>
<dbReference type="InterPro" id="IPR000846">
    <property type="entry name" value="DapB_N"/>
</dbReference>
<dbReference type="InterPro" id="IPR022664">
    <property type="entry name" value="DapB_N_CS"/>
</dbReference>
<dbReference type="InterPro" id="IPR023940">
    <property type="entry name" value="DHDPR_bac"/>
</dbReference>
<dbReference type="InterPro" id="IPR036291">
    <property type="entry name" value="NAD(P)-bd_dom_sf"/>
</dbReference>
<dbReference type="NCBIfam" id="TIGR00036">
    <property type="entry name" value="dapB"/>
    <property type="match status" value="1"/>
</dbReference>
<dbReference type="PANTHER" id="PTHR20836:SF0">
    <property type="entry name" value="4-HYDROXY-TETRAHYDRODIPICOLINATE REDUCTASE 1, CHLOROPLASTIC-RELATED"/>
    <property type="match status" value="1"/>
</dbReference>
<dbReference type="PANTHER" id="PTHR20836">
    <property type="entry name" value="DIHYDRODIPICOLINATE REDUCTASE"/>
    <property type="match status" value="1"/>
</dbReference>
<dbReference type="Pfam" id="PF05173">
    <property type="entry name" value="DapB_C"/>
    <property type="match status" value="1"/>
</dbReference>
<dbReference type="Pfam" id="PF01113">
    <property type="entry name" value="DapB_N"/>
    <property type="match status" value="1"/>
</dbReference>
<dbReference type="PIRSF" id="PIRSF000161">
    <property type="entry name" value="DHPR"/>
    <property type="match status" value="1"/>
</dbReference>
<dbReference type="SUPFAM" id="SSF55347">
    <property type="entry name" value="Glyceraldehyde-3-phosphate dehydrogenase-like, C-terminal domain"/>
    <property type="match status" value="1"/>
</dbReference>
<dbReference type="SUPFAM" id="SSF51735">
    <property type="entry name" value="NAD(P)-binding Rossmann-fold domains"/>
    <property type="match status" value="1"/>
</dbReference>
<dbReference type="PROSITE" id="PS01298">
    <property type="entry name" value="DAPB"/>
    <property type="match status" value="1"/>
</dbReference>
<feature type="chain" id="PRO_0000141518" description="4-hydroxy-tetrahydrodipicolinate reductase">
    <location>
        <begin position="1"/>
        <end position="274"/>
    </location>
</feature>
<feature type="active site" description="Proton donor/acceptor" evidence="1">
    <location>
        <position position="160"/>
    </location>
</feature>
<feature type="active site" description="Proton donor" evidence="1">
    <location>
        <position position="164"/>
    </location>
</feature>
<feature type="binding site" evidence="1">
    <location>
        <begin position="8"/>
        <end position="13"/>
    </location>
    <ligand>
        <name>NAD(+)</name>
        <dbReference type="ChEBI" id="CHEBI:57540"/>
    </ligand>
</feature>
<feature type="binding site" evidence="1">
    <location>
        <position position="34"/>
    </location>
    <ligand>
        <name>NAD(+)</name>
        <dbReference type="ChEBI" id="CHEBI:57540"/>
    </ligand>
</feature>
<feature type="binding site" evidence="1">
    <location>
        <begin position="102"/>
        <end position="104"/>
    </location>
    <ligand>
        <name>NAD(+)</name>
        <dbReference type="ChEBI" id="CHEBI:57540"/>
    </ligand>
</feature>
<feature type="binding site" evidence="1">
    <location>
        <begin position="128"/>
        <end position="131"/>
    </location>
    <ligand>
        <name>NAD(+)</name>
        <dbReference type="ChEBI" id="CHEBI:57540"/>
    </ligand>
</feature>
<feature type="binding site" evidence="1">
    <location>
        <position position="161"/>
    </location>
    <ligand>
        <name>(S)-2,3,4,5-tetrahydrodipicolinate</name>
        <dbReference type="ChEBI" id="CHEBI:16845"/>
    </ligand>
</feature>
<feature type="binding site" evidence="1">
    <location>
        <begin position="170"/>
        <end position="171"/>
    </location>
    <ligand>
        <name>(S)-2,3,4,5-tetrahydrodipicolinate</name>
        <dbReference type="ChEBI" id="CHEBI:16845"/>
    </ligand>
</feature>
<keyword id="KW-0028">Amino-acid biosynthesis</keyword>
<keyword id="KW-0963">Cytoplasm</keyword>
<keyword id="KW-0220">Diaminopimelate biosynthesis</keyword>
<keyword id="KW-0457">Lysine biosynthesis</keyword>
<keyword id="KW-0520">NAD</keyword>
<keyword id="KW-0521">NADP</keyword>
<keyword id="KW-0560">Oxidoreductase</keyword>
<keyword id="KW-1185">Reference proteome</keyword>
<evidence type="ECO:0000255" key="1">
    <source>
        <dbReference type="HAMAP-Rule" id="MF_00102"/>
    </source>
</evidence>
<evidence type="ECO:0000305" key="2"/>
<name>DAPB_METJA</name>